<organism>
    <name type="scientific">Rabies virus (strain SAD B19)</name>
    <name type="common">RABV</name>
    <dbReference type="NCBI Taxonomy" id="11300"/>
    <lineage>
        <taxon>Viruses</taxon>
        <taxon>Riboviria</taxon>
        <taxon>Orthornavirae</taxon>
        <taxon>Negarnaviricota</taxon>
        <taxon>Haploviricotina</taxon>
        <taxon>Monjiviricetes</taxon>
        <taxon>Mononegavirales</taxon>
        <taxon>Rhabdoviridae</taxon>
        <taxon>Alpharhabdovirinae</taxon>
        <taxon>Lyssavirus</taxon>
        <taxon>Lyssavirus rabies</taxon>
    </lineage>
</organism>
<reference key="1">
    <citation type="journal article" date="1990" name="Virology">
        <title>Molecular cloning and complete nucleotide sequence of the attenuated rabies virus SAD B19.</title>
        <authorList>
            <person name="Conzelmann K.-K."/>
            <person name="Cox J.H."/>
            <person name="Schneider L.G."/>
            <person name="Thiel H.-J."/>
        </authorList>
    </citation>
    <scope>NUCLEOTIDE SEQUENCE [GENOMIC RNA]</scope>
</reference>
<reference key="2">
    <citation type="submission" date="2004-04" db="EMBL/GenBank/DDBJ databases">
        <title>Analysis of the whole sequence of rabies virus vaccine strain SRV9.</title>
        <authorList>
            <person name="Wang T."/>
            <person name="Zhang S."/>
            <person name="Hu R."/>
        </authorList>
    </citation>
    <scope>NUCLEOTIDE SEQUENCE [GENOMIC RNA]</scope>
    <source>
        <strain>SRV9</strain>
    </source>
</reference>
<reference key="3">
    <citation type="submission" date="2007-01" db="EMBL/GenBank/DDBJ databases">
        <title>Complete nucleotide sequencing of SAD derivatives of attenuated rabies virus vaccine strains.</title>
        <authorList>
            <person name="Geue L."/>
            <person name="Schares S."/>
            <person name="Schnick C."/>
            <person name="Kliemt J."/>
            <person name="Beckert A."/>
            <person name="Hoffmann B."/>
            <person name="Freuling C."/>
            <person name="Marston D."/>
            <person name="McElhinney L."/>
            <person name="Fooks A."/>
            <person name="Zanoni R."/>
            <person name="Peterhans E."/>
            <person name="Cox J.H."/>
            <person name="Mueller T."/>
        </authorList>
    </citation>
    <scope>NUCLEOTIDE SEQUENCE [GENOMIC RNA]</scope>
    <source>
        <strain>Isolate SAD B19</strain>
        <strain>Isolate SAD VA1</strain>
        <strain>Isolate SAD1-3670 var 1</strain>
        <strain>Isolate SAD1-3670 var 2</strain>
        <strain>Isolate SAG 2</strain>
    </source>
</reference>
<reference key="4">
    <citation type="journal article" date="1999" name="J. Virol.">
        <title>Phosphorylation of rabies virus nucleoprotein regulates viral RNA transcription and replication by modulating leader RNA encapsidation.</title>
        <authorList>
            <person name="Yang J."/>
            <person name="Koprowski H."/>
            <person name="Dietzschold B."/>
            <person name="Fu Z.F."/>
        </authorList>
    </citation>
    <scope>PHOSPHORYLATION AT SER-389</scope>
    <scope>MUTAGENESIS OF SER-389</scope>
</reference>
<reference key="5">
    <citation type="journal article" date="2002" name="J. Virol.">
        <title>Both viral transcription and replication are reduced when the rabies virus nucleoprotein is not phosphorylated.</title>
        <authorList>
            <person name="Wu X."/>
            <person name="Gong X."/>
            <person name="Foley H.D."/>
            <person name="Schnell M.J."/>
            <person name="Fu Z.F."/>
        </authorList>
    </citation>
    <scope>PHOSPHORYLATION AT SER-389</scope>
    <scope>MUTAGENESIS OF SER-389</scope>
</reference>
<reference key="6">
    <citation type="journal article" date="2003" name="Biochem. Biophys. Res. Commun.">
        <title>Rabies virus nucleoprotein is phosphorylated by cellular casein kinase II.</title>
        <authorList>
            <person name="Wu X."/>
            <person name="Lei X."/>
            <person name="Fu Z.F."/>
        </authorList>
    </citation>
    <scope>PHOSPHORYLATION AT SER-389 BY HOST CK2</scope>
</reference>
<reference key="7">
    <citation type="journal article" date="2004" name="J. Gen. Virol.">
        <title>Interactions amongst rabies virus nucleoprotein, phosphoprotein and genomic RNA in virus-infected and transfected cells.</title>
        <authorList>
            <person name="Liu P."/>
            <person name="Yang J."/>
            <person name="Wu X."/>
            <person name="Fu Z.F."/>
        </authorList>
    </citation>
    <scope>INTERACTION WITH PHOSPHOPROTEIN</scope>
</reference>
<sequence>MDADKIVFKVNNQVVSLKPEIIVDQYEYKYPAIKDLKKPCITLGKAPDLNKAYKSVLSGMSAAKLNPDDVCSYLAAAMQFFEGTCPEDWTSYGIVIARKGDKITPGSLVEIKRTDVEGNWALTGGMELTRDPTVPEHASLVGLLLSLYRLSKISGQNTGNYKTNIADRIEQIFETAPFVKIVEHHTLMTTHKMCANWSTIPNFRFLAGTYDMFFSRIEHLYSAIRVGTVVTAYEDCSGLVSFTGFIKQINLTAREAILYFFHKNFEEEIRRMFEPGQETAVPHSYFIHFRSLGLSGKSPYSSNAVGHVFNLIHFVGCYMGQVRSLNATVIAACAPHEMSVLGGYLGEEFFGKGTFERRFFRDEKELQEYEAAELTKTDVALADDGTVNSDDEDYFSGETRSPEAVYTRIMMNGGRLKRSHIRRYVSVSSNHQARPNSFAEFLNKTYSSDS</sequence>
<name>NCAP_RABVS</name>
<dbReference type="EMBL" id="M31046">
    <property type="protein sequence ID" value="AAA47199.1"/>
    <property type="molecule type" value="Genomic_RNA"/>
</dbReference>
<dbReference type="EMBL" id="AF499686">
    <property type="protein sequence ID" value="AAT48623.1"/>
    <property type="molecule type" value="Genomic_RNA"/>
</dbReference>
<dbReference type="EMBL" id="EF206709">
    <property type="protein sequence ID" value="ABN11301.1"/>
    <property type="molecule type" value="Genomic_RNA"/>
</dbReference>
<dbReference type="EMBL" id="EF206716">
    <property type="protein sequence ID" value="ABN11336.1"/>
    <property type="molecule type" value="Genomic_RNA"/>
</dbReference>
<dbReference type="EMBL" id="EF206717">
    <property type="protein sequence ID" value="ABN11341.1"/>
    <property type="molecule type" value="Genomic_RNA"/>
</dbReference>
<dbReference type="EMBL" id="EF206718">
    <property type="protein sequence ID" value="ABN11346.1"/>
    <property type="molecule type" value="Genomic_RNA"/>
</dbReference>
<dbReference type="EMBL" id="EF206719">
    <property type="protein sequence ID" value="ABN11351.1"/>
    <property type="molecule type" value="Genomic_RNA"/>
</dbReference>
<dbReference type="PIR" id="A34746">
    <property type="entry name" value="VHVNSB"/>
</dbReference>
<dbReference type="SMR" id="P16285"/>
<dbReference type="iPTMnet" id="P16285"/>
<dbReference type="Proteomes" id="UP000006363">
    <property type="component" value="Genome"/>
</dbReference>
<dbReference type="Proteomes" id="UP000007308">
    <property type="component" value="Genome"/>
</dbReference>
<dbReference type="Proteomes" id="UP000100286">
    <property type="component" value="Genome"/>
</dbReference>
<dbReference type="Proteomes" id="UP000107382">
    <property type="component" value="Genome"/>
</dbReference>
<dbReference type="Proteomes" id="UP000118099">
    <property type="component" value="Genome"/>
</dbReference>
<dbReference type="Proteomes" id="UP000167748">
    <property type="component" value="Genome"/>
</dbReference>
<dbReference type="Proteomes" id="UP000174835">
    <property type="component" value="Genome"/>
</dbReference>
<dbReference type="GO" id="GO:0019029">
    <property type="term" value="C:helical viral capsid"/>
    <property type="evidence" value="ECO:0007669"/>
    <property type="project" value="UniProtKB-KW"/>
</dbReference>
<dbReference type="GO" id="GO:0030430">
    <property type="term" value="C:host cell cytoplasm"/>
    <property type="evidence" value="ECO:0007669"/>
    <property type="project" value="UniProtKB-SubCell"/>
</dbReference>
<dbReference type="GO" id="GO:1990904">
    <property type="term" value="C:ribonucleoprotein complex"/>
    <property type="evidence" value="ECO:0007669"/>
    <property type="project" value="UniProtKB-KW"/>
</dbReference>
<dbReference type="GO" id="GO:0019013">
    <property type="term" value="C:viral nucleocapsid"/>
    <property type="evidence" value="ECO:0007669"/>
    <property type="project" value="UniProtKB-KW"/>
</dbReference>
<dbReference type="GO" id="GO:0003723">
    <property type="term" value="F:RNA binding"/>
    <property type="evidence" value="ECO:0007669"/>
    <property type="project" value="UniProtKB-KW"/>
</dbReference>
<dbReference type="Gene3D" id="1.10.3610.10">
    <property type="entry name" value="Nucleoprotein"/>
    <property type="match status" value="1"/>
</dbReference>
<dbReference type="Gene3D" id="1.10.3570.10">
    <property type="entry name" value="Rhabdovirus nucleocapsid protein like domain"/>
    <property type="match status" value="1"/>
</dbReference>
<dbReference type="InterPro" id="IPR000448">
    <property type="entry name" value="Rhabdo_ncapsid"/>
</dbReference>
<dbReference type="InterPro" id="IPR023331">
    <property type="entry name" value="Rhabdovirus_ncapsid_C"/>
</dbReference>
<dbReference type="InterPro" id="IPR023330">
    <property type="entry name" value="Rhabdovirus_ncapsid_N"/>
</dbReference>
<dbReference type="InterPro" id="IPR035961">
    <property type="entry name" value="Rhabdovirus_nucleoprotein-like"/>
</dbReference>
<dbReference type="Pfam" id="PF00945">
    <property type="entry name" value="Rhabdo_ncap"/>
    <property type="match status" value="1"/>
</dbReference>
<dbReference type="SUPFAM" id="SSF140809">
    <property type="entry name" value="Rhabdovirus nucleoprotein-like"/>
    <property type="match status" value="1"/>
</dbReference>
<feature type="chain" id="PRO_0000222819" description="Nucleoprotein">
    <location>
        <begin position="1"/>
        <end position="450"/>
    </location>
</feature>
<feature type="modified residue" description="Phosphoserine; by host CK2" evidence="2 3 4">
    <location>
        <position position="389"/>
    </location>
</feature>
<feature type="mutagenesis site" description="Increases leader RNA encapsidation, but decreases viral transcription and replication." evidence="2 4">
    <original>S</original>
    <variation>A</variation>
    <location>
        <position position="389"/>
    </location>
</feature>
<feature type="mutagenesis site" description="Decreases viral transcription and replication." evidence="2 4">
    <original>S</original>
    <variation>D</variation>
    <location>
        <position position="389"/>
    </location>
</feature>
<feature type="mutagenesis site" description="No effect on viral transcription and replication." evidence="2 4">
    <original>S</original>
    <variation>E</variation>
    <location>
        <position position="389"/>
    </location>
</feature>
<protein>
    <recommendedName>
        <fullName>Nucleoprotein</fullName>
        <shortName>NP</shortName>
    </recommendedName>
    <alternativeName>
        <fullName>Nucleocapsid protein</fullName>
        <shortName>Protein N</shortName>
    </alternativeName>
</protein>
<evidence type="ECO:0000250" key="1"/>
<evidence type="ECO:0000269" key="2">
    <source>
    </source>
</evidence>
<evidence type="ECO:0000269" key="3">
    <source>
    </source>
</evidence>
<evidence type="ECO:0000269" key="4">
    <source>
    </source>
</evidence>
<evidence type="ECO:0000305" key="5"/>
<comment type="function">
    <text>Encapsidates the genome in a ratio of one protein N per nine ribonucleotides, protecting it from nucleases. If expressed without protein P it binds non-specifically RNA and therefore can bind it's own mRNA. Interaction with protein P abolishes any non-specific RNA binding, and prevents phosphorylation. The soluble N-P complex encapsidates specifically the genomic RNA, with protein N protecting the genome like a pearl necklace. The encapsidated genomic RNA is termed the nucleocapsid (NC) and serves as template for viral transcription and replication. Protein N binds protein P in the NC through a different interaction, and can be phosphorylated. Subsequent viral replication is dependent on intracellular concentration of newly synthesized protein N. During replication, encapsidation by protein N is coupled to RNA synthesis and all replicative products are resistant to nucleases.</text>
</comment>
<comment type="subunit">
    <text>Homomultimerizes to form the nucleocapsid. Binds to viral genomic RNA. In nucleocapsid, binds protein P and thereby positions the polymerase on the template. Protein P acts as a chaperone on free protein N to prevent it from aggregation before encapsidating genomic RNA.</text>
</comment>
<comment type="subcellular location">
    <subcellularLocation>
        <location>Virion</location>
    </subcellularLocation>
    <subcellularLocation>
        <location>Host cytoplasm</location>
    </subcellularLocation>
</comment>
<comment type="PTM">
    <text evidence="2 3 4">Phosphorylated by host CK2. Unphosphorylated protein N seems to have a better affinity for leader viral promoter encapsidation. Phosphorylation of protein N in ribonucleocapsid may stabilize the interaction with protein P, thereby playing an important role in viral transcription/replication.</text>
</comment>
<comment type="miscellaneous">
    <text evidence="1">Displays a superantigen activity in human and mouse, activating mostly V-beta-8 subtypes of T-cell receptor.</text>
</comment>
<comment type="similarity">
    <text evidence="5">Belongs to the lyssavirus nucleocapsid protein family.</text>
</comment>
<accession>P16285</accession>
<accession>Q6HA98</accession>
<accession>Q7TBN9</accession>
<keyword id="KW-0167">Capsid protein</keyword>
<keyword id="KW-1139">Helical capsid protein</keyword>
<keyword id="KW-1035">Host cytoplasm</keyword>
<keyword id="KW-0597">Phosphoprotein</keyword>
<keyword id="KW-0687">Ribonucleoprotein</keyword>
<keyword id="KW-0694">RNA-binding</keyword>
<keyword id="KW-0766">Superantigen</keyword>
<keyword id="KW-0543">Viral nucleoprotein</keyword>
<keyword id="KW-0946">Virion</keyword>
<organismHost>
    <name type="scientific">Homo sapiens</name>
    <name type="common">Human</name>
    <dbReference type="NCBI Taxonomy" id="9606"/>
</organismHost>
<organismHost>
    <name type="scientific">Mammalia</name>
    <dbReference type="NCBI Taxonomy" id="40674"/>
</organismHost>
<gene>
    <name type="primary">N</name>
</gene>
<proteinExistence type="evidence at protein level"/>